<gene>
    <name evidence="1" type="primary">ndhB2</name>
</gene>
<dbReference type="EC" id="7.1.1.-" evidence="1"/>
<dbReference type="EMBL" id="AB240139">
    <property type="protein sequence ID" value="BAE48077.1"/>
    <property type="molecule type" value="Genomic_DNA"/>
</dbReference>
<dbReference type="SMR" id="P0CD01"/>
<dbReference type="KEGG" id="nto:3776347"/>
<dbReference type="KEGG" id="nto:3776348"/>
<dbReference type="OrthoDB" id="1712451at2759"/>
<dbReference type="GO" id="GO:0009535">
    <property type="term" value="C:chloroplast thylakoid membrane"/>
    <property type="evidence" value="ECO:0007669"/>
    <property type="project" value="UniProtKB-SubCell"/>
</dbReference>
<dbReference type="GO" id="GO:0008137">
    <property type="term" value="F:NADH dehydrogenase (ubiquinone) activity"/>
    <property type="evidence" value="ECO:0007669"/>
    <property type="project" value="InterPro"/>
</dbReference>
<dbReference type="GO" id="GO:0048038">
    <property type="term" value="F:quinone binding"/>
    <property type="evidence" value="ECO:0007669"/>
    <property type="project" value="UniProtKB-KW"/>
</dbReference>
<dbReference type="GO" id="GO:0042773">
    <property type="term" value="P:ATP synthesis coupled electron transport"/>
    <property type="evidence" value="ECO:0007669"/>
    <property type="project" value="InterPro"/>
</dbReference>
<dbReference type="GO" id="GO:0019684">
    <property type="term" value="P:photosynthesis, light reaction"/>
    <property type="evidence" value="ECO:0007669"/>
    <property type="project" value="UniProtKB-UniRule"/>
</dbReference>
<dbReference type="HAMAP" id="MF_00445">
    <property type="entry name" value="NDH1_NuoN_1"/>
    <property type="match status" value="1"/>
</dbReference>
<dbReference type="InterPro" id="IPR010096">
    <property type="entry name" value="NADH-Q_OxRdtase_suN/2"/>
</dbReference>
<dbReference type="InterPro" id="IPR001750">
    <property type="entry name" value="ND/Mrp_TM"/>
</dbReference>
<dbReference type="InterPro" id="IPR045693">
    <property type="entry name" value="Ndh2_N"/>
</dbReference>
<dbReference type="NCBIfam" id="TIGR01770">
    <property type="entry name" value="NDH_I_N"/>
    <property type="match status" value="1"/>
</dbReference>
<dbReference type="NCBIfam" id="NF002701">
    <property type="entry name" value="PRK02504.1"/>
    <property type="match status" value="1"/>
</dbReference>
<dbReference type="PANTHER" id="PTHR22773">
    <property type="entry name" value="NADH DEHYDROGENASE"/>
    <property type="match status" value="1"/>
</dbReference>
<dbReference type="Pfam" id="PF19530">
    <property type="entry name" value="Ndh2_N"/>
    <property type="match status" value="1"/>
</dbReference>
<dbReference type="Pfam" id="PF00361">
    <property type="entry name" value="Proton_antipo_M"/>
    <property type="match status" value="1"/>
</dbReference>
<dbReference type="PRINTS" id="PR01434">
    <property type="entry name" value="NADHDHGNASE5"/>
</dbReference>
<comment type="function">
    <text evidence="1">NDH shuttles electrons from NAD(P)H:plastoquinone, via FMN and iron-sulfur (Fe-S) centers, to quinones in the photosynthetic chain and possibly in a chloroplast respiratory chain. The immediate electron acceptor for the enzyme in this species is believed to be plastoquinone. Couples the redox reaction to proton translocation, and thus conserves the redox energy in a proton gradient.</text>
</comment>
<comment type="catalytic activity">
    <reaction evidence="1">
        <text>a plastoquinone + NADH + (n+1) H(+)(in) = a plastoquinol + NAD(+) + n H(+)(out)</text>
        <dbReference type="Rhea" id="RHEA:42608"/>
        <dbReference type="Rhea" id="RHEA-COMP:9561"/>
        <dbReference type="Rhea" id="RHEA-COMP:9562"/>
        <dbReference type="ChEBI" id="CHEBI:15378"/>
        <dbReference type="ChEBI" id="CHEBI:17757"/>
        <dbReference type="ChEBI" id="CHEBI:57540"/>
        <dbReference type="ChEBI" id="CHEBI:57945"/>
        <dbReference type="ChEBI" id="CHEBI:62192"/>
    </reaction>
</comment>
<comment type="catalytic activity">
    <reaction evidence="1">
        <text>a plastoquinone + NADPH + (n+1) H(+)(in) = a plastoquinol + NADP(+) + n H(+)(out)</text>
        <dbReference type="Rhea" id="RHEA:42612"/>
        <dbReference type="Rhea" id="RHEA-COMP:9561"/>
        <dbReference type="Rhea" id="RHEA-COMP:9562"/>
        <dbReference type="ChEBI" id="CHEBI:15378"/>
        <dbReference type="ChEBI" id="CHEBI:17757"/>
        <dbReference type="ChEBI" id="CHEBI:57783"/>
        <dbReference type="ChEBI" id="CHEBI:58349"/>
        <dbReference type="ChEBI" id="CHEBI:62192"/>
    </reaction>
</comment>
<comment type="subunit">
    <text evidence="1">NDH is composed of at least 16 different subunits, 5 of which are encoded in the nucleus.</text>
</comment>
<comment type="subcellular location">
    <subcellularLocation>
        <location evidence="1">Plastid</location>
        <location evidence="1">Chloroplast thylakoid membrane</location>
        <topology evidence="1">Multi-pass membrane protein</topology>
    </subcellularLocation>
</comment>
<comment type="similarity">
    <text evidence="1">Belongs to the complex I subunit 2 family.</text>
</comment>
<accession>P0CD01</accession>
<accession>Q33BY3</accession>
<organism>
    <name type="scientific">Nicotiana tomentosiformis</name>
    <name type="common">Tobacco</name>
    <dbReference type="NCBI Taxonomy" id="4098"/>
    <lineage>
        <taxon>Eukaryota</taxon>
        <taxon>Viridiplantae</taxon>
        <taxon>Streptophyta</taxon>
        <taxon>Embryophyta</taxon>
        <taxon>Tracheophyta</taxon>
        <taxon>Spermatophyta</taxon>
        <taxon>Magnoliopsida</taxon>
        <taxon>eudicotyledons</taxon>
        <taxon>Gunneridae</taxon>
        <taxon>Pentapetalae</taxon>
        <taxon>asterids</taxon>
        <taxon>lamiids</taxon>
        <taxon>Solanales</taxon>
        <taxon>Solanaceae</taxon>
        <taxon>Nicotianoideae</taxon>
        <taxon>Nicotianeae</taxon>
        <taxon>Nicotiana</taxon>
    </lineage>
</organism>
<name>NU2C2_NICTO</name>
<reference key="1">
    <citation type="journal article" date="2006" name="Mol. Genet. Genomics">
        <title>The chloroplast genome of Nicotiana sylvestris and Nicotiana tomentosiformis: complete sequencing confirms that the Nicotiana sylvestris progenitor is the maternal genome donor of Nicotiana tabacum.</title>
        <authorList>
            <person name="Yukawa M."/>
            <person name="Tsudzuki T."/>
            <person name="Sugiura M."/>
        </authorList>
    </citation>
    <scope>NUCLEOTIDE SEQUENCE [LARGE SCALE GENOMIC DNA]</scope>
</reference>
<evidence type="ECO:0000255" key="1">
    <source>
        <dbReference type="HAMAP-Rule" id="MF_00445"/>
    </source>
</evidence>
<feature type="chain" id="PRO_0000391288" description="NAD(P)H-quinone oxidoreductase subunit 2 B, chloroplastic">
    <location>
        <begin position="1"/>
        <end position="510"/>
    </location>
</feature>
<feature type="transmembrane region" description="Helical" evidence="1">
    <location>
        <begin position="24"/>
        <end position="44"/>
    </location>
</feature>
<feature type="transmembrane region" description="Helical" evidence="1">
    <location>
        <begin position="57"/>
        <end position="77"/>
    </location>
</feature>
<feature type="transmembrane region" description="Helical" evidence="1">
    <location>
        <begin position="99"/>
        <end position="119"/>
    </location>
</feature>
<feature type="transmembrane region" description="Helical" evidence="1">
    <location>
        <begin position="124"/>
        <end position="144"/>
    </location>
</feature>
<feature type="transmembrane region" description="Helical" evidence="1">
    <location>
        <begin position="149"/>
        <end position="169"/>
    </location>
</feature>
<feature type="transmembrane region" description="Helical" evidence="1">
    <location>
        <begin position="183"/>
        <end position="203"/>
    </location>
</feature>
<feature type="transmembrane region" description="Helical" evidence="1">
    <location>
        <begin position="227"/>
        <end position="247"/>
    </location>
</feature>
<feature type="transmembrane region" description="Helical" evidence="1">
    <location>
        <begin position="295"/>
        <end position="315"/>
    </location>
</feature>
<feature type="transmembrane region" description="Helical" evidence="1">
    <location>
        <begin position="323"/>
        <end position="343"/>
    </location>
</feature>
<feature type="transmembrane region" description="Helical" evidence="1">
    <location>
        <begin position="354"/>
        <end position="374"/>
    </location>
</feature>
<feature type="transmembrane region" description="Helical" evidence="1">
    <location>
        <begin position="395"/>
        <end position="415"/>
    </location>
</feature>
<feature type="transmembrane region" description="Helical" evidence="1">
    <location>
        <begin position="418"/>
        <end position="438"/>
    </location>
</feature>
<feature type="transmembrane region" description="Helical" evidence="1">
    <location>
        <begin position="484"/>
        <end position="504"/>
    </location>
</feature>
<proteinExistence type="inferred from homology"/>
<sequence>MIWHVQNENFILDSTRIFMKAFHLLLFDGSLIFPECILIFGLILLLMIDSTSDQKDIPWLYFISSTSLVMSITALLFRWREEPMISFSGNFQTNNFNEIFQFLILLCSTLCIPLSVEYIECTEMAITEFLLFVLTATLGGMFLCGANDLITIFVAPECFSLCSYLLSGYTKKDVRSNEATMKYLLMGGASSSILVHGFSWLYGSSGGEIELQEIVNGLINTQMYNSPGISIALIFITVGIGFKLSPAPSHQWTPDVYEGSPTPVVAFLSVTSKVAASASATRIFDIPFYFSSNEWHLLLEILAILSMILGNLIAITQTSMKRMLAYSSIGQIGYVIIGIIVGDSNDGYASMITYMLFYISMNLGTFACIVLFGLRTGTDNIRDYAGLYTKDPFLALSLALCLLSLGGLPPLAGFFGKLYLFWCGWQAGLYFLVLIGLLTSVVSIYYYLKIIKLLMTGRNQEITPHVRNYRRSPLRSNNSIELSMIVCVIASTIPGISMNPIIAIAQDSLF</sequence>
<protein>
    <recommendedName>
        <fullName evidence="1">NAD(P)H-quinone oxidoreductase subunit 2 B, chloroplastic</fullName>
        <ecNumber evidence="1">7.1.1.-</ecNumber>
    </recommendedName>
    <alternativeName>
        <fullName evidence="1">NAD(P)H dehydrogenase, subunit 2 B</fullName>
    </alternativeName>
    <alternativeName>
        <fullName evidence="1">NADH-plastoquinone oxidoreductase subunit 2 B</fullName>
    </alternativeName>
</protein>
<geneLocation type="chloroplast"/>
<keyword id="KW-0150">Chloroplast</keyword>
<keyword id="KW-0472">Membrane</keyword>
<keyword id="KW-0520">NAD</keyword>
<keyword id="KW-0521">NADP</keyword>
<keyword id="KW-0934">Plastid</keyword>
<keyword id="KW-0618">Plastoquinone</keyword>
<keyword id="KW-0874">Quinone</keyword>
<keyword id="KW-0793">Thylakoid</keyword>
<keyword id="KW-1278">Translocase</keyword>
<keyword id="KW-0812">Transmembrane</keyword>
<keyword id="KW-1133">Transmembrane helix</keyword>
<keyword id="KW-0813">Transport</keyword>